<organism>
    <name type="scientific">Bartonella quintana (strain Toulouse)</name>
    <name type="common">Rochalimaea quintana</name>
    <dbReference type="NCBI Taxonomy" id="283165"/>
    <lineage>
        <taxon>Bacteria</taxon>
        <taxon>Pseudomonadati</taxon>
        <taxon>Pseudomonadota</taxon>
        <taxon>Alphaproteobacteria</taxon>
        <taxon>Hyphomicrobiales</taxon>
        <taxon>Bartonellaceae</taxon>
        <taxon>Bartonella</taxon>
    </lineage>
</organism>
<dbReference type="EMBL" id="BX897700">
    <property type="protein sequence ID" value="CAF26531.1"/>
    <property type="molecule type" value="Genomic_DNA"/>
</dbReference>
<dbReference type="RefSeq" id="WP_011179734.1">
    <property type="nucleotide sequence ID" value="NC_005955.1"/>
</dbReference>
<dbReference type="SMR" id="Q6FYV9"/>
<dbReference type="KEGG" id="bqu:BQ10640"/>
<dbReference type="eggNOG" id="COG3505">
    <property type="taxonomic scope" value="Bacteria"/>
</dbReference>
<dbReference type="HOGENOM" id="CLU_028732_0_0_5"/>
<dbReference type="OrthoDB" id="9759295at2"/>
<dbReference type="Proteomes" id="UP000000597">
    <property type="component" value="Chromosome"/>
</dbReference>
<dbReference type="GO" id="GO:0005886">
    <property type="term" value="C:plasma membrane"/>
    <property type="evidence" value="ECO:0007669"/>
    <property type="project" value="UniProtKB-SubCell"/>
</dbReference>
<dbReference type="CDD" id="cd01127">
    <property type="entry name" value="TrwB_TraG_TraD_VirD4"/>
    <property type="match status" value="1"/>
</dbReference>
<dbReference type="Gene3D" id="3.40.50.300">
    <property type="entry name" value="P-loop containing nucleotide triphosphate hydrolases"/>
    <property type="match status" value="1"/>
</dbReference>
<dbReference type="InterPro" id="IPR027417">
    <property type="entry name" value="P-loop_NTPase"/>
</dbReference>
<dbReference type="InterPro" id="IPR051539">
    <property type="entry name" value="T4SS-coupling_protein"/>
</dbReference>
<dbReference type="InterPro" id="IPR014135">
    <property type="entry name" value="Ti-typ_conjug_TS_TraG-like"/>
</dbReference>
<dbReference type="InterPro" id="IPR003688">
    <property type="entry name" value="TraG/VirD4"/>
</dbReference>
<dbReference type="NCBIfam" id="NF010394">
    <property type="entry name" value="PRK13822.1"/>
    <property type="match status" value="1"/>
</dbReference>
<dbReference type="NCBIfam" id="TIGR02767">
    <property type="entry name" value="TraG-Ti"/>
    <property type="match status" value="1"/>
</dbReference>
<dbReference type="PANTHER" id="PTHR37937">
    <property type="entry name" value="CONJUGATIVE TRANSFER: DNA TRANSPORT"/>
    <property type="match status" value="1"/>
</dbReference>
<dbReference type="PANTHER" id="PTHR37937:SF1">
    <property type="entry name" value="CONJUGATIVE TRANSFER: DNA TRANSPORT"/>
    <property type="match status" value="1"/>
</dbReference>
<dbReference type="Pfam" id="PF02534">
    <property type="entry name" value="T4SS-DNA_transf"/>
    <property type="match status" value="1"/>
</dbReference>
<dbReference type="SUPFAM" id="SSF52540">
    <property type="entry name" value="P-loop containing nucleoside triphosphate hydrolases"/>
    <property type="match status" value="1"/>
</dbReference>
<feature type="chain" id="PRO_0000281581" description="Type IV secretion system-coupling protein VirD4">
    <location>
        <begin position="1"/>
        <end position="639"/>
    </location>
</feature>
<feature type="transmembrane region" description="Helical" evidence="1">
    <location>
        <begin position="8"/>
        <end position="28"/>
    </location>
</feature>
<feature type="transmembrane region" description="Helical" evidence="1">
    <location>
        <begin position="49"/>
        <end position="69"/>
    </location>
</feature>
<feature type="transmembrane region" description="Helical" evidence="1">
    <location>
        <begin position="75"/>
        <end position="95"/>
    </location>
</feature>
<feature type="transmembrane region" description="Helical" evidence="1">
    <location>
        <begin position="118"/>
        <end position="138"/>
    </location>
</feature>
<keyword id="KW-1003">Cell membrane</keyword>
<keyword id="KW-0472">Membrane</keyword>
<keyword id="KW-0812">Transmembrane</keyword>
<keyword id="KW-1133">Transmembrane helix</keyword>
<keyword id="KW-0813">Transport</keyword>
<keyword id="KW-0843">Virulence</keyword>
<gene>
    <name type="primary">virD4</name>
    <name type="synonym">traG</name>
    <name type="ordered locus">BQ10640</name>
</gene>
<proteinExistence type="inferred from homology"/>
<reference key="1">
    <citation type="journal article" date="2004" name="Proc. Natl. Acad. Sci. U.S.A.">
        <title>The louse-borne human pathogen Bartonella quintana is a genomic derivative of the zoonotic agent Bartonella henselae.</title>
        <authorList>
            <person name="Alsmark U.C.M."/>
            <person name="Frank A.C."/>
            <person name="Karlberg E.O."/>
            <person name="Legault B.-A."/>
            <person name="Ardell D.H."/>
            <person name="Canbaeck B."/>
            <person name="Eriksson A.-S."/>
            <person name="Naeslund A.K."/>
            <person name="Handley S.A."/>
            <person name="Huvet M."/>
            <person name="La Scola B."/>
            <person name="Holmberg M."/>
            <person name="Andersson S.G.E."/>
        </authorList>
    </citation>
    <scope>NUCLEOTIDE SEQUENCE [LARGE SCALE GENOMIC DNA]</scope>
    <scope>POSSIBLE FUNCTION</scope>
    <source>
        <strain>Toulouse</strain>
    </source>
</reference>
<protein>
    <recommendedName>
        <fullName>Type IV secretion system-coupling protein VirD4</fullName>
    </recommendedName>
</protein>
<accession>Q6FYV9</accession>
<sequence length="639" mass="71061">MKYTKIQLALILMPIALGALTIFLVPHLLSFMINDLKANHVYWYVRSEPLLVLMLVATVSLCYTLSQKLHLRKAITLVSAVFFGITALYFIGGEIKRLTPYVGQQGITWSYALKFMDPMVVFGVICGVVLLVIQVMISSPPTSKVKRAKKGIFGDASWMNLKEAAKIFPANGQIVVGERYRVDQDGVCNIPFAPGNKTTWGKGGTAPLLTFNLDFGSTHMIFFAGSGGYKTTSTVVPTCLTYPGPIVCLDPSTEIAPMVRFARKKMGNRNVIVLDPNSLLTKNFNVLDWLLDDSVPRTQREANIVGFSKLLLTDKKSENSSAEYFSTQAHNLLTALLAHVIFSDEYEDSERNLKTLRAILSQSETAVVNQLRMIQETTPSPFIREMVGIFTEMADQTFSGVYTTASKDTQWLSLSNYADLVCGNDFSSSDIANGKTDVFLNLPASILNSYPAIGRVIIGAFLNAMVTADGKYKKRVLFVLDEVDLLGYMNILEEARDRGRKYGTSLMLFYQSSGQLVNHFGEAGARSWFESCSFVSYAAIKDLQTAKDISERCGQMTVEVTGTNKSRGLSLGKSSYNVNYQQRALILPHEIIQEMRQDEQIILMQGQPPLRCGRAIYFRRKEMLAAANKNRFAPQAKKN</sequence>
<comment type="function">
    <text>Component of the type IV secretion system VirB/VirD4 which could be a major virulence determinant for subversion of human endothelial cell (HEC) function.</text>
</comment>
<comment type="subcellular location">
    <subcellularLocation>
        <location evidence="2">Cell membrane</location>
        <topology evidence="2">Multi-pass membrane protein</topology>
    </subcellularLocation>
</comment>
<comment type="similarity">
    <text evidence="2">Belongs to the VirD4/TraG family.</text>
</comment>
<name>VIRD4_BARQU</name>
<evidence type="ECO:0000255" key="1"/>
<evidence type="ECO:0000305" key="2"/>